<dbReference type="EMBL" id="CP000853">
    <property type="protein sequence ID" value="ABW18140.1"/>
    <property type="molecule type" value="Genomic_DNA"/>
</dbReference>
<dbReference type="RefSeq" id="WP_012158454.1">
    <property type="nucleotide sequence ID" value="NC_009922.1"/>
</dbReference>
<dbReference type="SMR" id="A8MLX3"/>
<dbReference type="STRING" id="350688.Clos_0578"/>
<dbReference type="KEGG" id="aoe:Clos_0578"/>
<dbReference type="eggNOG" id="COG1481">
    <property type="taxonomic scope" value="Bacteria"/>
</dbReference>
<dbReference type="HOGENOM" id="CLU_053282_0_0_9"/>
<dbReference type="OrthoDB" id="401278at2"/>
<dbReference type="Proteomes" id="UP000000269">
    <property type="component" value="Chromosome"/>
</dbReference>
<dbReference type="GO" id="GO:0003677">
    <property type="term" value="F:DNA binding"/>
    <property type="evidence" value="ECO:0007669"/>
    <property type="project" value="UniProtKB-UniRule"/>
</dbReference>
<dbReference type="GO" id="GO:0051301">
    <property type="term" value="P:cell division"/>
    <property type="evidence" value="ECO:0007669"/>
    <property type="project" value="UniProtKB-UniRule"/>
</dbReference>
<dbReference type="GO" id="GO:0043937">
    <property type="term" value="P:regulation of sporulation"/>
    <property type="evidence" value="ECO:0007669"/>
    <property type="project" value="InterPro"/>
</dbReference>
<dbReference type="Gene3D" id="3.10.28.10">
    <property type="entry name" value="Homing endonucleases"/>
    <property type="match status" value="1"/>
</dbReference>
<dbReference type="HAMAP" id="MF_01420">
    <property type="entry name" value="HTH_type_WhiA"/>
    <property type="match status" value="1"/>
</dbReference>
<dbReference type="InterPro" id="IPR027434">
    <property type="entry name" value="Homing_endonucl"/>
</dbReference>
<dbReference type="InterPro" id="IPR018478">
    <property type="entry name" value="Sporu_reg_WhiA_N_dom"/>
</dbReference>
<dbReference type="InterPro" id="IPR003802">
    <property type="entry name" value="Sporulation_regulator_WhiA"/>
</dbReference>
<dbReference type="InterPro" id="IPR023054">
    <property type="entry name" value="Sporulation_regulator_WhiA_C"/>
</dbReference>
<dbReference type="InterPro" id="IPR039518">
    <property type="entry name" value="WhiA_LAGLIDADG_dom"/>
</dbReference>
<dbReference type="NCBIfam" id="TIGR00647">
    <property type="entry name" value="DNA_bind_WhiA"/>
    <property type="match status" value="1"/>
</dbReference>
<dbReference type="PANTHER" id="PTHR37307">
    <property type="entry name" value="CELL DIVISION PROTEIN WHIA-RELATED"/>
    <property type="match status" value="1"/>
</dbReference>
<dbReference type="PANTHER" id="PTHR37307:SF1">
    <property type="entry name" value="CELL DIVISION PROTEIN WHIA-RELATED"/>
    <property type="match status" value="1"/>
</dbReference>
<dbReference type="Pfam" id="PF02650">
    <property type="entry name" value="HTH_WhiA"/>
    <property type="match status" value="1"/>
</dbReference>
<dbReference type="Pfam" id="PF14527">
    <property type="entry name" value="LAGLIDADG_WhiA"/>
    <property type="match status" value="1"/>
</dbReference>
<dbReference type="Pfam" id="PF10298">
    <property type="entry name" value="WhiA_N"/>
    <property type="match status" value="1"/>
</dbReference>
<dbReference type="SUPFAM" id="SSF55608">
    <property type="entry name" value="Homing endonucleases"/>
    <property type="match status" value="1"/>
</dbReference>
<name>WHIA_ALKOO</name>
<gene>
    <name evidence="1" type="primary">whiA</name>
    <name type="ordered locus">Clos_0578</name>
</gene>
<comment type="function">
    <text evidence="1">Involved in cell division and chromosome segregation.</text>
</comment>
<comment type="similarity">
    <text evidence="1">Belongs to the WhiA family.</text>
</comment>
<sequence>MSFSAVTKGELARIYSKDRCCQLAELAALIRMCGTLQLVGGAQKLNIKLTTENPAIARKLFKLFKDLFGVHIEVMIRRNPRLRKNNHYLMVVTHGMGSTDILEKVKILKKEANSFDISYGVPLMLLQNRCCRRAYLRGAFLGGGSVSDPEKTYHLEFVTHSHEHSESLRDLINDFQLTSKIVERKGSYVVYLKEGDQIVDLLNIMEAHSALLELENVRIYKQMRNDVNRIVNCETANLSKTVDAAIRQIENIEYIKNTVGLGYLPENLREIAEIRLEYEDATLKELGEMLSPAIGKSGVNHRLRKIDEIATKLQEGKIKN</sequence>
<feature type="chain" id="PRO_0000376421" description="Probable cell division protein WhiA">
    <location>
        <begin position="1"/>
        <end position="320"/>
    </location>
</feature>
<feature type="DNA-binding region" description="H-T-H motif" evidence="1">
    <location>
        <begin position="282"/>
        <end position="315"/>
    </location>
</feature>
<evidence type="ECO:0000255" key="1">
    <source>
        <dbReference type="HAMAP-Rule" id="MF_01420"/>
    </source>
</evidence>
<keyword id="KW-0131">Cell cycle</keyword>
<keyword id="KW-0132">Cell division</keyword>
<keyword id="KW-0238">DNA-binding</keyword>
<keyword id="KW-1185">Reference proteome</keyword>
<proteinExistence type="inferred from homology"/>
<reference key="1">
    <citation type="submission" date="2007-10" db="EMBL/GenBank/DDBJ databases">
        <title>Complete genome of Alkaliphilus oremlandii OhILAs.</title>
        <authorList>
            <person name="Copeland A."/>
            <person name="Lucas S."/>
            <person name="Lapidus A."/>
            <person name="Barry K."/>
            <person name="Detter J.C."/>
            <person name="Glavina del Rio T."/>
            <person name="Hammon N."/>
            <person name="Israni S."/>
            <person name="Dalin E."/>
            <person name="Tice H."/>
            <person name="Pitluck S."/>
            <person name="Chain P."/>
            <person name="Malfatti S."/>
            <person name="Shin M."/>
            <person name="Vergez L."/>
            <person name="Schmutz J."/>
            <person name="Larimer F."/>
            <person name="Land M."/>
            <person name="Hauser L."/>
            <person name="Kyrpides N."/>
            <person name="Mikhailova N."/>
            <person name="Stolz J.F."/>
            <person name="Dawson A."/>
            <person name="Fisher E."/>
            <person name="Crable B."/>
            <person name="Perera E."/>
            <person name="Lisak J."/>
            <person name="Ranganathan M."/>
            <person name="Basu P."/>
            <person name="Richardson P."/>
        </authorList>
    </citation>
    <scope>NUCLEOTIDE SEQUENCE [LARGE SCALE GENOMIC DNA]</scope>
    <source>
        <strain>OhILAs</strain>
    </source>
</reference>
<accession>A8MLX3</accession>
<organism>
    <name type="scientific">Alkaliphilus oremlandii (strain OhILAs)</name>
    <name type="common">Clostridium oremlandii (strain OhILAs)</name>
    <dbReference type="NCBI Taxonomy" id="350688"/>
    <lineage>
        <taxon>Bacteria</taxon>
        <taxon>Bacillati</taxon>
        <taxon>Bacillota</taxon>
        <taxon>Clostridia</taxon>
        <taxon>Peptostreptococcales</taxon>
        <taxon>Natronincolaceae</taxon>
        <taxon>Alkaliphilus</taxon>
    </lineage>
</organism>
<protein>
    <recommendedName>
        <fullName evidence="1">Probable cell division protein WhiA</fullName>
    </recommendedName>
</protein>